<proteinExistence type="evidence at protein level"/>
<name>HOL1_YEAST</name>
<accession>P53389</accession>
<accession>D6W1N0</accession>
<keyword id="KW-0472">Membrane</keyword>
<keyword id="KW-1185">Reference proteome</keyword>
<keyword id="KW-0812">Transmembrane</keyword>
<keyword id="KW-1133">Transmembrane helix</keyword>
<keyword id="KW-0813">Transport</keyword>
<evidence type="ECO:0000255" key="1"/>
<evidence type="ECO:0000305" key="2"/>
<organism>
    <name type="scientific">Saccharomyces cerevisiae (strain ATCC 204508 / S288c)</name>
    <name type="common">Baker's yeast</name>
    <dbReference type="NCBI Taxonomy" id="559292"/>
    <lineage>
        <taxon>Eukaryota</taxon>
        <taxon>Fungi</taxon>
        <taxon>Dikarya</taxon>
        <taxon>Ascomycota</taxon>
        <taxon>Saccharomycotina</taxon>
        <taxon>Saccharomycetes</taxon>
        <taxon>Saccharomycetales</taxon>
        <taxon>Saccharomycetaceae</taxon>
        <taxon>Saccharomyces</taxon>
    </lineage>
</organism>
<protein>
    <recommendedName>
        <fullName>Protein HOL1</fullName>
    </recommendedName>
</protein>
<comment type="function">
    <text>Seems to be involved in the uptake of several cations and of histidinol.</text>
</comment>
<comment type="subcellular location">
    <subcellularLocation>
        <location evidence="2">Membrane</location>
        <topology evidence="2">Multi-pass membrane protein</topology>
    </subcellularLocation>
</comment>
<sequence length="586" mass="65348">MDKYTNRDHPDYIPGTFNIYSSQNLENGIIYESKLKKTSSGVVLIPQPSYSPNDPLNWSSWRKLAHFGLMAFITAFTAATSNDAGAAQDSLNEIYGISYDSMNTGAGVLFLGIGWSTLFLAPFANLYGRKITYIVCTTLGLFGALWFALAKRTSDTIWSQLFVGISESCAEAQVQLSLSDIFFQHQLGSVLTVYIMCTSIGTFLGPLIAGYISAFTNFRWVGWVAVIISGGLLITIIFGCEETYFDRGQYMTPLTSCQSGYEDGTTLQNSDNTAVSRRKRHLDAKLSTPGAMGEKGVDLSETAEFEVNNEEEVTIPETRELIDGSKEHLKPYPKRVAILTKATNLKGYGFKQYFKYLKINLRMFLFPPVWLSGMFWGIQDVFLTFYLTTQESAYYEPPWNYSDFGVAIMNVPTLIGAVIGCICAGIVSDYFVLWMARHNRGILEAEFRLYFSIATAIIGPAGLLMFGIGTARQWPWQAIYVGLGFVGFAWGCSGDIAMAYLMDCYPDMVLEGMVCTAIINNTISCIFTFTCSDWLAASGTENTYIALAVINFGITAFALPMYYYGKRIRLWTKRWYLQSVNLRDGV</sequence>
<feature type="chain" id="PRO_0000084026" description="Protein HOL1">
    <location>
        <begin position="1"/>
        <end position="586"/>
    </location>
</feature>
<feature type="topological domain" description="Extracellular" evidence="1">
    <location>
        <begin position="1"/>
        <end position="66"/>
    </location>
</feature>
<feature type="transmembrane region" description="Helical" evidence="1">
    <location>
        <begin position="67"/>
        <end position="87"/>
    </location>
</feature>
<feature type="topological domain" description="Cytoplasmic" evidence="1">
    <location>
        <begin position="88"/>
        <end position="103"/>
    </location>
</feature>
<feature type="transmembrane region" description="Helical" evidence="1">
    <location>
        <begin position="104"/>
        <end position="124"/>
    </location>
</feature>
<feature type="topological domain" description="Extracellular" evidence="1">
    <location>
        <begin position="125"/>
        <end position="130"/>
    </location>
</feature>
<feature type="transmembrane region" description="Helical" evidence="1">
    <location>
        <begin position="131"/>
        <end position="151"/>
    </location>
</feature>
<feature type="topological domain" description="Cytoplasmic" evidence="1">
    <location>
        <begin position="152"/>
        <end position="189"/>
    </location>
</feature>
<feature type="transmembrane region" description="Helical" evidence="1">
    <location>
        <begin position="190"/>
        <end position="210"/>
    </location>
</feature>
<feature type="topological domain" description="Extracellular" evidence="1">
    <location>
        <begin position="211"/>
        <end position="219"/>
    </location>
</feature>
<feature type="transmembrane region" description="Helical" evidence="1">
    <location>
        <begin position="220"/>
        <end position="240"/>
    </location>
</feature>
<feature type="topological domain" description="Cytoplasmic" evidence="1">
    <location>
        <begin position="241"/>
        <end position="362"/>
    </location>
</feature>
<feature type="transmembrane region" description="Helical" evidence="1">
    <location>
        <begin position="363"/>
        <end position="383"/>
    </location>
</feature>
<feature type="topological domain" description="Extracellular" evidence="1">
    <location>
        <begin position="384"/>
        <end position="413"/>
    </location>
</feature>
<feature type="transmembrane region" description="Helical" evidence="1">
    <location>
        <begin position="414"/>
        <end position="434"/>
    </location>
</feature>
<feature type="topological domain" description="Cytoplasmic" evidence="1">
    <location>
        <begin position="435"/>
        <end position="448"/>
    </location>
</feature>
<feature type="transmembrane region" description="Helical" evidence="1">
    <location>
        <begin position="449"/>
        <end position="469"/>
    </location>
</feature>
<feature type="topological domain" description="Extracellular" evidence="1">
    <location>
        <begin position="470"/>
        <end position="477"/>
    </location>
</feature>
<feature type="transmembrane region" description="Helical" evidence="1">
    <location>
        <begin position="478"/>
        <end position="498"/>
    </location>
</feature>
<feature type="topological domain" description="Cytoplasmic" evidence="1">
    <location>
        <begin position="499"/>
        <end position="508"/>
    </location>
</feature>
<feature type="transmembrane region" description="Helical" evidence="1">
    <location>
        <begin position="509"/>
        <end position="529"/>
    </location>
</feature>
<feature type="topological domain" description="Extracellular" evidence="1">
    <location>
        <begin position="530"/>
        <end position="544"/>
    </location>
</feature>
<feature type="transmembrane region" description="Helical" evidence="1">
    <location>
        <begin position="545"/>
        <end position="565"/>
    </location>
</feature>
<feature type="topological domain" description="Cytoplasmic" evidence="1">
    <location>
        <begin position="566"/>
        <end position="586"/>
    </location>
</feature>
<feature type="sequence conflict" description="In Ref. 1; AAB47713." evidence="2" ref="1">
    <original>L</original>
    <variation>F</variation>
    <location>
        <position position="510"/>
    </location>
</feature>
<reference key="1">
    <citation type="journal article" date="1996" name="J. Bacteriol.">
        <title>Amino acid substitutions in membrane-spanning domains of Hol1, a member of the major facilitator superfamily of transporters, confer nonselective cation uptake in Saccharomyces cerevisiae.</title>
        <authorList>
            <person name="Wright M.B."/>
            <person name="Howell E.A."/>
            <person name="Gaber R.F."/>
        </authorList>
    </citation>
    <scope>NUCLEOTIDE SEQUENCE [GENOMIC DNA]</scope>
</reference>
<reference key="2">
    <citation type="journal article" date="1997" name="Nature">
        <title>The nucleotide sequence of Saccharomyces cerevisiae chromosome XIV and its evolutionary implications.</title>
        <authorList>
            <person name="Philippsen P."/>
            <person name="Kleine K."/>
            <person name="Poehlmann R."/>
            <person name="Duesterhoeft A."/>
            <person name="Hamberg K."/>
            <person name="Hegemann J.H."/>
            <person name="Obermaier B."/>
            <person name="Urrestarazu L.A."/>
            <person name="Aert R."/>
            <person name="Albermann K."/>
            <person name="Altmann R."/>
            <person name="Andre B."/>
            <person name="Baladron V."/>
            <person name="Ballesta J.P.G."/>
            <person name="Becam A.-M."/>
            <person name="Beinhauer J.D."/>
            <person name="Boskovic J."/>
            <person name="Buitrago M.J."/>
            <person name="Bussereau F."/>
            <person name="Coster F."/>
            <person name="Crouzet M."/>
            <person name="D'Angelo M."/>
            <person name="Dal Pero F."/>
            <person name="De Antoni A."/>
            <person name="del Rey F."/>
            <person name="Doignon F."/>
            <person name="Domdey H."/>
            <person name="Dubois E."/>
            <person name="Fiedler T.A."/>
            <person name="Fleig U."/>
            <person name="Floeth M."/>
            <person name="Fritz C."/>
            <person name="Gaillardin C."/>
            <person name="Garcia-Cantalejo J.M."/>
            <person name="Glansdorff N."/>
            <person name="Goffeau A."/>
            <person name="Gueldener U."/>
            <person name="Herbert C.J."/>
            <person name="Heumann K."/>
            <person name="Heuss-Neitzel D."/>
            <person name="Hilbert H."/>
            <person name="Hinni K."/>
            <person name="Iraqui Houssaini I."/>
            <person name="Jacquet M."/>
            <person name="Jimenez A."/>
            <person name="Jonniaux J.-L."/>
            <person name="Karpfinger-Hartl L."/>
            <person name="Lanfranchi G."/>
            <person name="Lepingle A."/>
            <person name="Levesque H."/>
            <person name="Lyck R."/>
            <person name="Maftahi M."/>
            <person name="Mallet L."/>
            <person name="Maurer C.T.C."/>
            <person name="Messenguy F."/>
            <person name="Mewes H.-W."/>
            <person name="Moestl D."/>
            <person name="Nasr F."/>
            <person name="Nicaud J.-M."/>
            <person name="Niedenthal R.K."/>
            <person name="Pandolfo D."/>
            <person name="Pierard A."/>
            <person name="Piravandi E."/>
            <person name="Planta R.J."/>
            <person name="Pohl T.M."/>
            <person name="Purnelle B."/>
            <person name="Rebischung C."/>
            <person name="Remacha M.A."/>
            <person name="Revuelta J.L."/>
            <person name="Rinke M."/>
            <person name="Saiz J.E."/>
            <person name="Sartorello F."/>
            <person name="Scherens B."/>
            <person name="Sen-Gupta M."/>
            <person name="Soler-Mira A."/>
            <person name="Urbanus J.H.M."/>
            <person name="Valle G."/>
            <person name="Van Dyck L."/>
            <person name="Verhasselt P."/>
            <person name="Vierendeels F."/>
            <person name="Vissers S."/>
            <person name="Voet M."/>
            <person name="Volckaert G."/>
            <person name="Wach A."/>
            <person name="Wambutt R."/>
            <person name="Wedler H."/>
            <person name="Zollner A."/>
            <person name="Hani J."/>
        </authorList>
    </citation>
    <scope>NUCLEOTIDE SEQUENCE [LARGE SCALE GENOMIC DNA]</scope>
    <source>
        <strain>ATCC 204508 / S288c</strain>
    </source>
</reference>
<reference key="3">
    <citation type="journal article" date="2014" name="G3 (Bethesda)">
        <title>The reference genome sequence of Saccharomyces cerevisiae: Then and now.</title>
        <authorList>
            <person name="Engel S.R."/>
            <person name="Dietrich F.S."/>
            <person name="Fisk D.G."/>
            <person name="Binkley G."/>
            <person name="Balakrishnan R."/>
            <person name="Costanzo M.C."/>
            <person name="Dwight S.S."/>
            <person name="Hitz B.C."/>
            <person name="Karra K."/>
            <person name="Nash R.S."/>
            <person name="Weng S."/>
            <person name="Wong E.D."/>
            <person name="Lloyd P."/>
            <person name="Skrzypek M.S."/>
            <person name="Miyasato S.R."/>
            <person name="Simison M."/>
            <person name="Cherry J.M."/>
        </authorList>
    </citation>
    <scope>GENOME REANNOTATION</scope>
    <source>
        <strain>ATCC 204508 / S288c</strain>
    </source>
</reference>
<reference key="4">
    <citation type="journal article" date="2006" name="Proc. Natl. Acad. Sci. U.S.A.">
        <title>A global topology map of the Saccharomyces cerevisiae membrane proteome.</title>
        <authorList>
            <person name="Kim H."/>
            <person name="Melen K."/>
            <person name="Oesterberg M."/>
            <person name="von Heijne G."/>
        </authorList>
    </citation>
    <scope>TOPOLOGY [LARGE SCALE ANALYSIS]</scope>
    <source>
        <strain>ATCC 208353 / W303-1A</strain>
    </source>
</reference>
<dbReference type="EMBL" id="L42348">
    <property type="protein sequence ID" value="AAB47713.1"/>
    <property type="molecule type" value="Genomic_DNA"/>
</dbReference>
<dbReference type="EMBL" id="Z71670">
    <property type="protein sequence ID" value="CAA96336.1"/>
    <property type="molecule type" value="Genomic_DNA"/>
</dbReference>
<dbReference type="EMBL" id="Z71671">
    <property type="protein sequence ID" value="CAA96338.1"/>
    <property type="molecule type" value="Genomic_DNA"/>
</dbReference>
<dbReference type="EMBL" id="BK006947">
    <property type="protein sequence ID" value="DAA10596.1"/>
    <property type="molecule type" value="Genomic_DNA"/>
</dbReference>
<dbReference type="PIR" id="S63386">
    <property type="entry name" value="S63386"/>
</dbReference>
<dbReference type="RefSeq" id="NP_014453.3">
    <property type="nucleotide sequence ID" value="NM_001183232.3"/>
</dbReference>
<dbReference type="BioGRID" id="35881">
    <property type="interactions" value="89"/>
</dbReference>
<dbReference type="DIP" id="DIP-7266N"/>
<dbReference type="FunCoup" id="P53389">
    <property type="interactions" value="49"/>
</dbReference>
<dbReference type="IntAct" id="P53389">
    <property type="interactions" value="2"/>
</dbReference>
<dbReference type="STRING" id="4932.YNR055C"/>
<dbReference type="TCDB" id="2.A.1.2.33">
    <property type="family name" value="the major facilitator superfamily (mfs)"/>
</dbReference>
<dbReference type="CarbonylDB" id="P53389"/>
<dbReference type="iPTMnet" id="P53389"/>
<dbReference type="PaxDb" id="4932-YNR055C"/>
<dbReference type="PeptideAtlas" id="P53389"/>
<dbReference type="EnsemblFungi" id="YNR055C_mRNA">
    <property type="protein sequence ID" value="YNR055C"/>
    <property type="gene ID" value="YNR055C"/>
</dbReference>
<dbReference type="GeneID" id="855792"/>
<dbReference type="KEGG" id="sce:YNR055C"/>
<dbReference type="AGR" id="SGD:S000005338"/>
<dbReference type="SGD" id="S000005338">
    <property type="gene designation" value="HOL1"/>
</dbReference>
<dbReference type="VEuPathDB" id="FungiDB:YNR055C"/>
<dbReference type="eggNOG" id="KOG0255">
    <property type="taxonomic scope" value="Eukaryota"/>
</dbReference>
<dbReference type="HOGENOM" id="CLU_008455_13_3_1"/>
<dbReference type="InParanoid" id="P53389"/>
<dbReference type="OMA" id="WGMQNIA"/>
<dbReference type="OrthoDB" id="5215911at2759"/>
<dbReference type="BioCyc" id="YEAST:G3O-33361-MONOMER"/>
<dbReference type="BioGRID-ORCS" id="855792">
    <property type="hits" value="1 hit in 10 CRISPR screens"/>
</dbReference>
<dbReference type="PRO" id="PR:P53389"/>
<dbReference type="Proteomes" id="UP000002311">
    <property type="component" value="Chromosome XIV"/>
</dbReference>
<dbReference type="RNAct" id="P53389">
    <property type="molecule type" value="protein"/>
</dbReference>
<dbReference type="GO" id="GO:0071944">
    <property type="term" value="C:cell periphery"/>
    <property type="evidence" value="ECO:0007005"/>
    <property type="project" value="SGD"/>
</dbReference>
<dbReference type="GO" id="GO:0000324">
    <property type="term" value="C:fungal-type vacuole"/>
    <property type="evidence" value="ECO:0007005"/>
    <property type="project" value="SGD"/>
</dbReference>
<dbReference type="GO" id="GO:0005739">
    <property type="term" value="C:mitochondrion"/>
    <property type="evidence" value="ECO:0007005"/>
    <property type="project" value="SGD"/>
</dbReference>
<dbReference type="GO" id="GO:0005886">
    <property type="term" value="C:plasma membrane"/>
    <property type="evidence" value="ECO:0000318"/>
    <property type="project" value="GO_Central"/>
</dbReference>
<dbReference type="GO" id="GO:0015665">
    <property type="term" value="F:alcohol transmembrane transporter activity"/>
    <property type="evidence" value="ECO:0000315"/>
    <property type="project" value="SGD"/>
</dbReference>
<dbReference type="GO" id="GO:0022890">
    <property type="term" value="F:inorganic cation transmembrane transporter activity"/>
    <property type="evidence" value="ECO:0000315"/>
    <property type="project" value="SGD"/>
</dbReference>
<dbReference type="GO" id="GO:0015203">
    <property type="term" value="F:polyamine transmembrane transporter activity"/>
    <property type="evidence" value="ECO:0000315"/>
    <property type="project" value="SGD"/>
</dbReference>
<dbReference type="GO" id="GO:0022857">
    <property type="term" value="F:transmembrane transporter activity"/>
    <property type="evidence" value="ECO:0000318"/>
    <property type="project" value="GO_Central"/>
</dbReference>
<dbReference type="GO" id="GO:0006812">
    <property type="term" value="P:monoatomic cation transport"/>
    <property type="evidence" value="ECO:0000315"/>
    <property type="project" value="SGD"/>
</dbReference>
<dbReference type="GO" id="GO:0015850">
    <property type="term" value="P:organic hydroxy compound transport"/>
    <property type="evidence" value="ECO:0000315"/>
    <property type="project" value="SGD"/>
</dbReference>
<dbReference type="GO" id="GO:1902047">
    <property type="term" value="P:polyamine transmembrane transport"/>
    <property type="evidence" value="ECO:0000315"/>
    <property type="project" value="SGD"/>
</dbReference>
<dbReference type="GO" id="GO:0055085">
    <property type="term" value="P:transmembrane transport"/>
    <property type="evidence" value="ECO:0000318"/>
    <property type="project" value="GO_Central"/>
</dbReference>
<dbReference type="CDD" id="cd17323">
    <property type="entry name" value="MFS_Tpo1_MDR_like"/>
    <property type="match status" value="1"/>
</dbReference>
<dbReference type="Gene3D" id="1.20.1250.20">
    <property type="entry name" value="MFS general substrate transporter like domains"/>
    <property type="match status" value="1"/>
</dbReference>
<dbReference type="InterPro" id="IPR011701">
    <property type="entry name" value="MFS"/>
</dbReference>
<dbReference type="InterPro" id="IPR036259">
    <property type="entry name" value="MFS_trans_sf"/>
</dbReference>
<dbReference type="PANTHER" id="PTHR23502">
    <property type="entry name" value="MAJOR FACILITATOR SUPERFAMILY"/>
    <property type="match status" value="1"/>
</dbReference>
<dbReference type="PANTHER" id="PTHR23502:SF34">
    <property type="entry name" value="PROTEIN HOL1"/>
    <property type="match status" value="1"/>
</dbReference>
<dbReference type="Pfam" id="PF07690">
    <property type="entry name" value="MFS_1"/>
    <property type="match status" value="1"/>
</dbReference>
<dbReference type="SUPFAM" id="SSF103473">
    <property type="entry name" value="MFS general substrate transporter"/>
    <property type="match status" value="1"/>
</dbReference>
<gene>
    <name type="primary">HOL1</name>
    <name type="ordered locus">YNR055C</name>
    <name type="ORF">N3494</name>
</gene>